<protein>
    <recommendedName>
        <fullName>PCI domain-containing protein 2</fullName>
    </recommendedName>
    <alternativeName>
        <fullName>CSN12-like protein</fullName>
    </alternativeName>
</protein>
<proteinExistence type="evidence at transcript level"/>
<name>PCID2_BOVIN</name>
<comment type="function">
    <text evidence="1 2">Required for B-cell survival through the regulation of the expression of cell-cycle checkpoint MAD2L1 protein during B cell differentiation (By similarity). As a component of the TREX-2 complex, involved in the export of mRNAs to the cytoplasm through the nuclear pores (By similarity). Binds and stabilizes BRCA2 and is thus involved in the control of R-loop-associated DNA damage and transcription-associated genomic instability (By similarity). Blocks the activity of the SRCAP chromatin remodeling complex by interacting with SRCAP complex member ZNHIT1 and inhibiting its interaction with the complex (By similarity). This prevents the deposition of histone variant H2AZ1/H2A.Z at the nucleosomes of key lymphoid fate regulator genes which suppresses their expression and restricts lymphoid lineage commitment (By similarity).</text>
</comment>
<comment type="subunit">
    <text evidence="1 2">Component of the nuclear pore complex (NPC)-associated TREX-2 complex (transcription and export complex 2), composed of at least GANP, 2 copies of ENY2, PCID2, SEM1/DSS1, and either centrin CETN2 or centrin CETN3. The TREX-2 complex also associates with ALYREF/ALY and with the nucleoporin NUP153 (By similarity). Interacts with BRCA2 (By similarity). Interacts with SRCAP chromatin remodeling complex component ZNHIT1; the interaction results in inhibition of SRCAP complex activity, preventing the deposition of histone variant H2AZ1/H2A.Z to lymphoid fate regulator genes and restricting lymphoid lineage commitment (By similarity).</text>
</comment>
<comment type="subcellular location">
    <subcellularLocation>
        <location evidence="1">Cytoplasm</location>
    </subcellularLocation>
    <subcellularLocation>
        <location evidence="1">Nucleus</location>
        <location evidence="1">Nuclear pore complex</location>
    </subcellularLocation>
</comment>
<comment type="similarity">
    <text evidence="4">Belongs to the CSN12 family.</text>
</comment>
<reference key="1">
    <citation type="submission" date="2005-11" db="EMBL/GenBank/DDBJ databases">
        <authorList>
            <consortium name="NIH - Mammalian Gene Collection (MGC) project"/>
        </authorList>
    </citation>
    <scope>NUCLEOTIDE SEQUENCE [LARGE SCALE MRNA]</scope>
    <source>
        <strain>Crossbred X Angus</strain>
        <tissue>Liver</tissue>
    </source>
</reference>
<sequence>MAHITINQYLQQVCEAIDTRDGASLAELVSFKHPHVANPRLQMASPEEKCQQVLEPPYDEMFAAHLRCTYAVGNHDFIEAYKCQTVIVQSFLRAFQAHKEENWALPVMYAVALDLRIFANNADQQLVKKGKSKVGDMLEKAAELLMGCFRVCASDTRAGIEDSKKRGMLFLVNQLFKIYFKINKLHLCKPLIRAIDSSNLKDDYSTAQRVTYRYYVGRKAMFDSDFKQAEEYLSFAFEHCHRSSQKNKRMVLIYLLPVKMLLGHMPTIELLRKYHLMQFAEVTRAVSEGNLLLLNEALAAHETFFIRCGIFLILEKLKIITYRNLFKKVNSLSSASSRYLLLKTHQLSLDAFLVALKFMQVEDVDIAEVQCILANLIYMGHIKGYISHQHQKLVVSKQNPFPPLSTVC</sequence>
<dbReference type="EMBL" id="BC109884">
    <property type="protein sequence ID" value="AAI09885.1"/>
    <property type="molecule type" value="mRNA"/>
</dbReference>
<dbReference type="RefSeq" id="NP_001033674.1">
    <property type="nucleotide sequence ID" value="NM_001038585.2"/>
</dbReference>
<dbReference type="SMR" id="Q2TBN6"/>
<dbReference type="FunCoup" id="Q2TBN6">
    <property type="interactions" value="3964"/>
</dbReference>
<dbReference type="STRING" id="9913.ENSBTAP00000073694"/>
<dbReference type="PaxDb" id="9913-ENSBTAP00000028959"/>
<dbReference type="GeneID" id="617943"/>
<dbReference type="KEGG" id="bta:617943"/>
<dbReference type="CTD" id="55795"/>
<dbReference type="eggNOG" id="KOG2688">
    <property type="taxonomic scope" value="Eukaryota"/>
</dbReference>
<dbReference type="InParanoid" id="Q2TBN6"/>
<dbReference type="OrthoDB" id="10252687at2759"/>
<dbReference type="Proteomes" id="UP000009136">
    <property type="component" value="Unplaced"/>
</dbReference>
<dbReference type="GO" id="GO:0005737">
    <property type="term" value="C:cytoplasm"/>
    <property type="evidence" value="ECO:0000250"/>
    <property type="project" value="UniProtKB"/>
</dbReference>
<dbReference type="GO" id="GO:0044615">
    <property type="term" value="C:nuclear pore nuclear basket"/>
    <property type="evidence" value="ECO:0000250"/>
    <property type="project" value="UniProtKB"/>
</dbReference>
<dbReference type="GO" id="GO:0005634">
    <property type="term" value="C:nucleus"/>
    <property type="evidence" value="ECO:0000250"/>
    <property type="project" value="UniProtKB"/>
</dbReference>
<dbReference type="GO" id="GO:0070390">
    <property type="term" value="C:transcription export complex 2"/>
    <property type="evidence" value="ECO:0000250"/>
    <property type="project" value="UniProtKB"/>
</dbReference>
<dbReference type="GO" id="GO:0003690">
    <property type="term" value="F:double-stranded DNA binding"/>
    <property type="evidence" value="ECO:0000318"/>
    <property type="project" value="GO_Central"/>
</dbReference>
<dbReference type="GO" id="GO:0003723">
    <property type="term" value="F:RNA binding"/>
    <property type="evidence" value="ECO:0000318"/>
    <property type="project" value="GO_Central"/>
</dbReference>
<dbReference type="GO" id="GO:0045814">
    <property type="term" value="P:negative regulation of gene expression, epigenetic"/>
    <property type="evidence" value="ECO:0000250"/>
    <property type="project" value="UniProtKB"/>
</dbReference>
<dbReference type="GO" id="GO:1905457">
    <property type="term" value="P:negative regulation of lymphoid progenitor cell differentiation"/>
    <property type="evidence" value="ECO:0000250"/>
    <property type="project" value="UniProtKB"/>
</dbReference>
<dbReference type="GO" id="GO:0016973">
    <property type="term" value="P:poly(A)+ mRNA export from nucleus"/>
    <property type="evidence" value="ECO:0000250"/>
    <property type="project" value="UniProtKB"/>
</dbReference>
<dbReference type="GO" id="GO:0000973">
    <property type="term" value="P:post-transcriptional tethering of RNA polymerase II gene DNA at nuclear periphery"/>
    <property type="evidence" value="ECO:0000318"/>
    <property type="project" value="GO_Central"/>
</dbReference>
<dbReference type="GO" id="GO:0015031">
    <property type="term" value="P:protein transport"/>
    <property type="evidence" value="ECO:0007669"/>
    <property type="project" value="UniProtKB-KW"/>
</dbReference>
<dbReference type="GO" id="GO:0048536">
    <property type="term" value="P:spleen development"/>
    <property type="evidence" value="ECO:0000250"/>
    <property type="project" value="UniProtKB"/>
</dbReference>
<dbReference type="GO" id="GO:0006368">
    <property type="term" value="P:transcription elongation by RNA polymerase II"/>
    <property type="evidence" value="ECO:0000318"/>
    <property type="project" value="GO_Central"/>
</dbReference>
<dbReference type="FunFam" id="1.10.10.10:FF:000146">
    <property type="entry name" value="PCI domain-containing protein 2 homolog"/>
    <property type="match status" value="1"/>
</dbReference>
<dbReference type="Gene3D" id="1.10.10.10">
    <property type="entry name" value="Winged helix-like DNA-binding domain superfamily/Winged helix DNA-binding domain"/>
    <property type="match status" value="1"/>
</dbReference>
<dbReference type="InterPro" id="IPR045114">
    <property type="entry name" value="Csn12-like"/>
</dbReference>
<dbReference type="InterPro" id="IPR000717">
    <property type="entry name" value="PCI_dom"/>
</dbReference>
<dbReference type="InterPro" id="IPR036388">
    <property type="entry name" value="WH-like_DNA-bd_sf"/>
</dbReference>
<dbReference type="PANTHER" id="PTHR12732:SF0">
    <property type="entry name" value="PCI DOMAIN-CONTAINING PROTEIN 2"/>
    <property type="match status" value="1"/>
</dbReference>
<dbReference type="PANTHER" id="PTHR12732">
    <property type="entry name" value="UNCHARACTERIZED PROTEASOME COMPONENT REGION PCI-CONTAINING"/>
    <property type="match status" value="1"/>
</dbReference>
<dbReference type="Pfam" id="PF01399">
    <property type="entry name" value="PCI"/>
    <property type="match status" value="1"/>
</dbReference>
<dbReference type="SMART" id="SM00753">
    <property type="entry name" value="PAM"/>
    <property type="match status" value="1"/>
</dbReference>
<dbReference type="PROSITE" id="PS50250">
    <property type="entry name" value="PCI"/>
    <property type="match status" value="1"/>
</dbReference>
<accession>Q2TBN6</accession>
<organism>
    <name type="scientific">Bos taurus</name>
    <name type="common">Bovine</name>
    <dbReference type="NCBI Taxonomy" id="9913"/>
    <lineage>
        <taxon>Eukaryota</taxon>
        <taxon>Metazoa</taxon>
        <taxon>Chordata</taxon>
        <taxon>Craniata</taxon>
        <taxon>Vertebrata</taxon>
        <taxon>Euteleostomi</taxon>
        <taxon>Mammalia</taxon>
        <taxon>Eutheria</taxon>
        <taxon>Laurasiatheria</taxon>
        <taxon>Artiodactyla</taxon>
        <taxon>Ruminantia</taxon>
        <taxon>Pecora</taxon>
        <taxon>Bovidae</taxon>
        <taxon>Bovinae</taxon>
        <taxon>Bos</taxon>
    </lineage>
</organism>
<feature type="initiator methionine" description="Removed" evidence="1">
    <location>
        <position position="1"/>
    </location>
</feature>
<feature type="chain" id="PRO_0000328622" description="PCI domain-containing protein 2">
    <location>
        <begin position="2"/>
        <end position="408"/>
    </location>
</feature>
<feature type="domain" description="PCI" evidence="3">
    <location>
        <begin position="210"/>
        <end position="400"/>
    </location>
</feature>
<feature type="modified residue" description="N-acetylalanine" evidence="1">
    <location>
        <position position="2"/>
    </location>
</feature>
<feature type="modified residue" description="Phosphoserine" evidence="1">
    <location>
        <position position="45"/>
    </location>
</feature>
<evidence type="ECO:0000250" key="1">
    <source>
        <dbReference type="UniProtKB" id="Q5JVF3"/>
    </source>
</evidence>
<evidence type="ECO:0000250" key="2">
    <source>
        <dbReference type="UniProtKB" id="Q8BFV2"/>
    </source>
</evidence>
<evidence type="ECO:0000255" key="3">
    <source>
        <dbReference type="PROSITE-ProRule" id="PRU01185"/>
    </source>
</evidence>
<evidence type="ECO:0000305" key="4"/>
<keyword id="KW-0007">Acetylation</keyword>
<keyword id="KW-0963">Cytoplasm</keyword>
<keyword id="KW-0509">mRNA transport</keyword>
<keyword id="KW-0906">Nuclear pore complex</keyword>
<keyword id="KW-0539">Nucleus</keyword>
<keyword id="KW-0597">Phosphoprotein</keyword>
<keyword id="KW-0653">Protein transport</keyword>
<keyword id="KW-1185">Reference proteome</keyword>
<keyword id="KW-0811">Translocation</keyword>
<keyword id="KW-0813">Transport</keyword>
<gene>
    <name type="primary">PCID2</name>
</gene>